<keyword id="KW-0067">ATP-binding</keyword>
<keyword id="KW-0317">Glutathione biosynthesis</keyword>
<keyword id="KW-0436">Ligase</keyword>
<keyword id="KW-0460">Magnesium</keyword>
<keyword id="KW-0464">Manganese</keyword>
<keyword id="KW-0479">Metal-binding</keyword>
<keyword id="KW-0547">Nucleotide-binding</keyword>
<keyword id="KW-1185">Reference proteome</keyword>
<organism>
    <name type="scientific">Ralstonia nicotianae (strain ATCC BAA-1114 / GMI1000)</name>
    <name type="common">Ralstonia solanacearum</name>
    <dbReference type="NCBI Taxonomy" id="267608"/>
    <lineage>
        <taxon>Bacteria</taxon>
        <taxon>Pseudomonadati</taxon>
        <taxon>Pseudomonadota</taxon>
        <taxon>Betaproteobacteria</taxon>
        <taxon>Burkholderiales</taxon>
        <taxon>Burkholderiaceae</taxon>
        <taxon>Ralstonia</taxon>
        <taxon>Ralstonia solanacearum species complex</taxon>
    </lineage>
</organism>
<name>GSHB_RALN1</name>
<sequence length="324" mass="35330">MRILFIVDPLSTFKIYKDSTFAMMREAAARGYAIYTCQQSQLTLSGNVVETVATPLALTGDEHDWYRSGDPRLLPLTGFDAVLMRKDPPFDMEYVTSTWLLEIAERQGARVFNKPQAIRDHSEKLAIAQFREFTAPTIVTRDAKRLREFHAEQGDVIFKPLDGMGGAGIFRVGADGMNLGSVIETLTHNGTRTVMAQQYIPAIRDGDKRILLIGGSPVPHALARVPMAGEVRGNLAAGGTGRAQLLSERDQVIAHALAPVLWQRGLLLVGLDVIGDYLTEVNVTSPTCFQEITQQTGFNVAGMFIDALERAAGKASGGLGRKLA</sequence>
<feature type="chain" id="PRO_0000197479" description="Glutathione synthetase">
    <location>
        <begin position="1"/>
        <end position="324"/>
    </location>
</feature>
<feature type="domain" description="ATP-grasp" evidence="2">
    <location>
        <begin position="124"/>
        <end position="309"/>
    </location>
</feature>
<feature type="binding site" evidence="2">
    <location>
        <begin position="150"/>
        <end position="206"/>
    </location>
    <ligand>
        <name>ATP</name>
        <dbReference type="ChEBI" id="CHEBI:30616"/>
    </ligand>
</feature>
<feature type="binding site" evidence="2">
    <location>
        <position position="280"/>
    </location>
    <ligand>
        <name>Mg(2+)</name>
        <dbReference type="ChEBI" id="CHEBI:18420"/>
    </ligand>
</feature>
<feature type="binding site" evidence="2">
    <location>
        <position position="282"/>
    </location>
    <ligand>
        <name>Mg(2+)</name>
        <dbReference type="ChEBI" id="CHEBI:18420"/>
    </ligand>
</feature>
<reference key="1">
    <citation type="journal article" date="2002" name="Nature">
        <title>Genome sequence of the plant pathogen Ralstonia solanacearum.</title>
        <authorList>
            <person name="Salanoubat M."/>
            <person name="Genin S."/>
            <person name="Artiguenave F."/>
            <person name="Gouzy J."/>
            <person name="Mangenot S."/>
            <person name="Arlat M."/>
            <person name="Billault A."/>
            <person name="Brottier P."/>
            <person name="Camus J.-C."/>
            <person name="Cattolico L."/>
            <person name="Chandler M."/>
            <person name="Choisne N."/>
            <person name="Claudel-Renard C."/>
            <person name="Cunnac S."/>
            <person name="Demange N."/>
            <person name="Gaspin C."/>
            <person name="Lavie M."/>
            <person name="Moisan A."/>
            <person name="Robert C."/>
            <person name="Saurin W."/>
            <person name="Schiex T."/>
            <person name="Siguier P."/>
            <person name="Thebault P."/>
            <person name="Whalen M."/>
            <person name="Wincker P."/>
            <person name="Levy M."/>
            <person name="Weissenbach J."/>
            <person name="Boucher C.A."/>
        </authorList>
    </citation>
    <scope>NUCLEOTIDE SEQUENCE [LARGE SCALE GENOMIC DNA]</scope>
    <source>
        <strain>ATCC BAA-1114 / GMI1000</strain>
    </source>
</reference>
<proteinExistence type="inferred from homology"/>
<accession>P58579</accession>
<gene>
    <name evidence="2" type="primary">gshB</name>
    <name type="ordered locus">RSc0345</name>
    <name type="ORF">RS03312</name>
</gene>
<evidence type="ECO:0000250" key="1"/>
<evidence type="ECO:0000255" key="2">
    <source>
        <dbReference type="HAMAP-Rule" id="MF_00162"/>
    </source>
</evidence>
<protein>
    <recommendedName>
        <fullName evidence="2">Glutathione synthetase</fullName>
        <ecNumber evidence="2">6.3.2.3</ecNumber>
    </recommendedName>
    <alternativeName>
        <fullName evidence="2">GSH synthetase</fullName>
        <shortName evidence="2">GSH-S</shortName>
        <shortName evidence="2">GSHase</shortName>
    </alternativeName>
    <alternativeName>
        <fullName evidence="2">Glutathione synthase</fullName>
    </alternativeName>
</protein>
<comment type="catalytic activity">
    <reaction evidence="2">
        <text>gamma-L-glutamyl-L-cysteine + glycine + ATP = glutathione + ADP + phosphate + H(+)</text>
        <dbReference type="Rhea" id="RHEA:13557"/>
        <dbReference type="ChEBI" id="CHEBI:15378"/>
        <dbReference type="ChEBI" id="CHEBI:30616"/>
        <dbReference type="ChEBI" id="CHEBI:43474"/>
        <dbReference type="ChEBI" id="CHEBI:57305"/>
        <dbReference type="ChEBI" id="CHEBI:57925"/>
        <dbReference type="ChEBI" id="CHEBI:58173"/>
        <dbReference type="ChEBI" id="CHEBI:456216"/>
        <dbReference type="EC" id="6.3.2.3"/>
    </reaction>
</comment>
<comment type="cofactor">
    <cofactor evidence="1">
        <name>Mg(2+)</name>
        <dbReference type="ChEBI" id="CHEBI:18420"/>
    </cofactor>
    <cofactor evidence="1">
        <name>Mn(2+)</name>
        <dbReference type="ChEBI" id="CHEBI:29035"/>
    </cofactor>
    <text evidence="1">Binds 1 Mg(2+) or Mn(2+) ion per subunit.</text>
</comment>
<comment type="pathway">
    <text evidence="2">Sulfur metabolism; glutathione biosynthesis; glutathione from L-cysteine and L-glutamate: step 2/2.</text>
</comment>
<comment type="similarity">
    <text evidence="2">Belongs to the prokaryotic GSH synthase family.</text>
</comment>
<dbReference type="EC" id="6.3.2.3" evidence="2"/>
<dbReference type="EMBL" id="AL646052">
    <property type="protein sequence ID" value="CAD13873.1"/>
    <property type="molecule type" value="Genomic_DNA"/>
</dbReference>
<dbReference type="RefSeq" id="WP_011000309.1">
    <property type="nucleotide sequence ID" value="NC_003295.1"/>
</dbReference>
<dbReference type="SMR" id="P58579"/>
<dbReference type="STRING" id="267608.RSc0345"/>
<dbReference type="EnsemblBacteria" id="CAD13873">
    <property type="protein sequence ID" value="CAD13873"/>
    <property type="gene ID" value="RSc0345"/>
</dbReference>
<dbReference type="KEGG" id="rso:RSc0345"/>
<dbReference type="eggNOG" id="COG0189">
    <property type="taxonomic scope" value="Bacteria"/>
</dbReference>
<dbReference type="HOGENOM" id="CLU_068239_0_0_4"/>
<dbReference type="UniPathway" id="UPA00142">
    <property type="reaction ID" value="UER00210"/>
</dbReference>
<dbReference type="Proteomes" id="UP000001436">
    <property type="component" value="Chromosome"/>
</dbReference>
<dbReference type="GO" id="GO:0005737">
    <property type="term" value="C:cytoplasm"/>
    <property type="evidence" value="ECO:0007669"/>
    <property type="project" value="TreeGrafter"/>
</dbReference>
<dbReference type="GO" id="GO:0005524">
    <property type="term" value="F:ATP binding"/>
    <property type="evidence" value="ECO:0007669"/>
    <property type="project" value="UniProtKB-UniRule"/>
</dbReference>
<dbReference type="GO" id="GO:0004363">
    <property type="term" value="F:glutathione synthase activity"/>
    <property type="evidence" value="ECO:0007669"/>
    <property type="project" value="UniProtKB-UniRule"/>
</dbReference>
<dbReference type="GO" id="GO:0046872">
    <property type="term" value="F:metal ion binding"/>
    <property type="evidence" value="ECO:0007669"/>
    <property type="project" value="UniProtKB-KW"/>
</dbReference>
<dbReference type="FunFam" id="3.30.1490.20:FF:000009">
    <property type="entry name" value="Glutathione synthetase"/>
    <property type="match status" value="1"/>
</dbReference>
<dbReference type="Gene3D" id="3.40.50.20">
    <property type="match status" value="1"/>
</dbReference>
<dbReference type="Gene3D" id="3.30.1490.20">
    <property type="entry name" value="ATP-grasp fold, A domain"/>
    <property type="match status" value="1"/>
</dbReference>
<dbReference type="Gene3D" id="3.30.470.20">
    <property type="entry name" value="ATP-grasp fold, B domain"/>
    <property type="match status" value="1"/>
</dbReference>
<dbReference type="HAMAP" id="MF_00162">
    <property type="entry name" value="GSH_S"/>
    <property type="match status" value="1"/>
</dbReference>
<dbReference type="InterPro" id="IPR011761">
    <property type="entry name" value="ATP-grasp"/>
</dbReference>
<dbReference type="InterPro" id="IPR013815">
    <property type="entry name" value="ATP_grasp_subdomain_1"/>
</dbReference>
<dbReference type="InterPro" id="IPR006284">
    <property type="entry name" value="Glut_synth_pro"/>
</dbReference>
<dbReference type="InterPro" id="IPR004218">
    <property type="entry name" value="GSHS_ATP-bd"/>
</dbReference>
<dbReference type="InterPro" id="IPR004215">
    <property type="entry name" value="GSHS_N"/>
</dbReference>
<dbReference type="InterPro" id="IPR016185">
    <property type="entry name" value="PreATP-grasp_dom_sf"/>
</dbReference>
<dbReference type="NCBIfam" id="TIGR01380">
    <property type="entry name" value="glut_syn"/>
    <property type="match status" value="1"/>
</dbReference>
<dbReference type="NCBIfam" id="NF003573">
    <property type="entry name" value="PRK05246.1"/>
    <property type="match status" value="1"/>
</dbReference>
<dbReference type="PANTHER" id="PTHR21621:SF4">
    <property type="entry name" value="GLUTATHIONE SYNTHETASE"/>
    <property type="match status" value="1"/>
</dbReference>
<dbReference type="PANTHER" id="PTHR21621">
    <property type="entry name" value="RIBOSOMAL PROTEIN S6 MODIFICATION PROTEIN"/>
    <property type="match status" value="1"/>
</dbReference>
<dbReference type="Pfam" id="PF02955">
    <property type="entry name" value="GSH-S_ATP"/>
    <property type="match status" value="1"/>
</dbReference>
<dbReference type="Pfam" id="PF02951">
    <property type="entry name" value="GSH-S_N"/>
    <property type="match status" value="1"/>
</dbReference>
<dbReference type="SUPFAM" id="SSF56059">
    <property type="entry name" value="Glutathione synthetase ATP-binding domain-like"/>
    <property type="match status" value="1"/>
</dbReference>
<dbReference type="SUPFAM" id="SSF52440">
    <property type="entry name" value="PreATP-grasp domain"/>
    <property type="match status" value="1"/>
</dbReference>
<dbReference type="PROSITE" id="PS50975">
    <property type="entry name" value="ATP_GRASP"/>
    <property type="match status" value="1"/>
</dbReference>